<evidence type="ECO:0000250" key="1">
    <source>
        <dbReference type="UniProtKB" id="P41348"/>
    </source>
</evidence>
<evidence type="ECO:0000269" key="2">
    <source>
    </source>
</evidence>
<evidence type="ECO:0000269" key="3">
    <source>
    </source>
</evidence>
<evidence type="ECO:0000269" key="4">
    <source>
    </source>
</evidence>
<evidence type="ECO:0000269" key="5">
    <source>
    </source>
</evidence>
<evidence type="ECO:0000269" key="6">
    <source>
    </source>
</evidence>
<evidence type="ECO:0000269" key="7">
    <source>
    </source>
</evidence>
<evidence type="ECO:0000269" key="8">
    <source>
    </source>
</evidence>
<evidence type="ECO:0000303" key="9">
    <source>
    </source>
</evidence>
<evidence type="ECO:0000303" key="10">
    <source>
    </source>
</evidence>
<evidence type="ECO:0000303" key="11">
    <source>
    </source>
</evidence>
<evidence type="ECO:0000303" key="12">
    <source>
    </source>
</evidence>
<evidence type="ECO:0000303" key="13">
    <source>
    </source>
</evidence>
<evidence type="ECO:0000305" key="14"/>
<evidence type="ECO:0000312" key="15">
    <source>
        <dbReference type="EMBL" id="BAA10479.1"/>
    </source>
</evidence>
<evidence type="ECO:0000312" key="16">
    <source>
        <dbReference type="PDB" id="1DJ7"/>
    </source>
</evidence>
<evidence type="ECO:0000312" key="17">
    <source>
        <dbReference type="PDB" id="2PU9"/>
    </source>
</evidence>
<evidence type="ECO:0007829" key="18">
    <source>
        <dbReference type="PDB" id="1DJ7"/>
    </source>
</evidence>
<evidence type="ECO:0007829" key="19">
    <source>
        <dbReference type="PDB" id="2PVG"/>
    </source>
</evidence>
<gene>
    <name evidence="12 15" type="primary">ftrC</name>
    <name type="ordered locus">sll0554</name>
</gene>
<name>FTRC_SYNY3</name>
<feature type="chain" id="PRO_0000423926" description="Ferredoxin-thioredoxin reductase, catalytic chain">
    <location>
        <begin position="1"/>
        <end position="118"/>
    </location>
</feature>
<feature type="active site" description="Nucleophile" evidence="2 3 5 6">
    <location>
        <position position="58"/>
    </location>
</feature>
<feature type="binding site" evidence="2 5">
    <location>
        <position position="56"/>
    </location>
    <ligand>
        <name>[4Fe-4S] cluster</name>
        <dbReference type="ChEBI" id="CHEBI:49883"/>
    </ligand>
</feature>
<feature type="binding site" evidence="2 5">
    <location>
        <position position="75"/>
    </location>
    <ligand>
        <name>[4Fe-4S] cluster</name>
        <dbReference type="ChEBI" id="CHEBI:49883"/>
    </ligand>
</feature>
<feature type="binding site" evidence="2 5">
    <location>
        <position position="77"/>
    </location>
    <ligand>
        <name>[4Fe-4S] cluster</name>
        <dbReference type="ChEBI" id="CHEBI:49883"/>
    </ligand>
</feature>
<feature type="binding site" evidence="2 5">
    <location>
        <position position="86"/>
    </location>
    <ligand>
        <name>[4Fe-4S] cluster</name>
        <dbReference type="ChEBI" id="CHEBI:49883"/>
    </ligand>
</feature>
<feature type="site" description="Increases the nucleophilicity of the active site Cys" evidence="6">
    <location>
        <position position="87"/>
    </location>
</feature>
<feature type="disulfide bond" description="Redox-active" evidence="2 5">
    <location>
        <begin position="58"/>
        <end position="88"/>
    </location>
</feature>
<feature type="mutagenesis site" description="Loss of enzyme activity." evidence="3">
    <original>C</original>
    <variation>S</variation>
    <location>
        <position position="58"/>
    </location>
</feature>
<feature type="mutagenesis site" description="Greatly reduced catalytic activity. Abolishes significant electronic interaction between the disulfide and a unique Fe site of the [4Fe-4S](2+) cluster in oxidized form of the reductase." evidence="3 6">
    <original>H</original>
    <variation>Y</variation>
    <location>
        <position position="87"/>
    </location>
</feature>
<feature type="mutagenesis site" description="Loss of enzyme activity." evidence="3">
    <original>C</original>
    <variation>A</variation>
    <location>
        <position position="88"/>
    </location>
</feature>
<feature type="helix" evidence="18">
    <location>
        <begin position="9"/>
        <end position="25"/>
    </location>
</feature>
<feature type="strand" evidence="18">
    <location>
        <begin position="31"/>
        <end position="33"/>
    </location>
</feature>
<feature type="helix" evidence="18">
    <location>
        <begin position="34"/>
        <end position="51"/>
    </location>
</feature>
<feature type="strand" evidence="18">
    <location>
        <begin position="57"/>
        <end position="59"/>
    </location>
</feature>
<feature type="helix" evidence="18">
    <location>
        <begin position="64"/>
        <end position="70"/>
    </location>
</feature>
<feature type="strand" evidence="18">
    <location>
        <begin position="74"/>
        <end position="76"/>
    </location>
</feature>
<feature type="helix" evidence="18">
    <location>
        <begin position="78"/>
        <end position="83"/>
    </location>
</feature>
<feature type="strand" evidence="18">
    <location>
        <begin position="89"/>
        <end position="92"/>
    </location>
</feature>
<feature type="strand" evidence="19">
    <location>
        <begin position="96"/>
        <end position="99"/>
    </location>
</feature>
<feature type="helix" evidence="18">
    <location>
        <begin position="107"/>
        <end position="115"/>
    </location>
</feature>
<protein>
    <recommendedName>
        <fullName evidence="9 10 11 12 15">Ferredoxin-thioredoxin reductase, catalytic chain</fullName>
        <shortName evidence="9 10 11 13">FTR-C</shortName>
        <ecNumber evidence="3">1.8.7.2</ecNumber>
    </recommendedName>
    <alternativeName>
        <fullName evidence="1">Ferredoxin-thioredoxin reductase subunit B</fullName>
        <shortName evidence="1">FTR-B</shortName>
    </alternativeName>
</protein>
<proteinExistence type="evidence at protein level"/>
<keyword id="KW-0002">3D-structure</keyword>
<keyword id="KW-0004">4Fe-4S</keyword>
<keyword id="KW-1015">Disulfide bond</keyword>
<keyword id="KW-0249">Electron transport</keyword>
<keyword id="KW-0408">Iron</keyword>
<keyword id="KW-0411">Iron-sulfur</keyword>
<keyword id="KW-0479">Metal-binding</keyword>
<keyword id="KW-0560">Oxidoreductase</keyword>
<keyword id="KW-0676">Redox-active center</keyword>
<keyword id="KW-1185">Reference proteome</keyword>
<keyword id="KW-0813">Transport</keyword>
<comment type="function">
    <text evidence="2 3 5 8">Catalytic subunit of the ferredoxin-thioredoxin reductase (FTR), which catalyzes the two-electron reduction of thioredoxins by the electrons provided by reduced ferredoxin.</text>
</comment>
<comment type="catalytic activity">
    <reaction evidence="3 5 6 8">
        <text>[thioredoxin]-disulfide + 2 reduced [2Fe-2S]-[ferredoxin] + 2 H(+) = [thioredoxin]-dithiol + 2 oxidized [2Fe-2S]-[ferredoxin]</text>
        <dbReference type="Rhea" id="RHEA:42336"/>
        <dbReference type="Rhea" id="RHEA-COMP:10000"/>
        <dbReference type="Rhea" id="RHEA-COMP:10001"/>
        <dbReference type="Rhea" id="RHEA-COMP:10698"/>
        <dbReference type="Rhea" id="RHEA-COMP:10700"/>
        <dbReference type="ChEBI" id="CHEBI:15378"/>
        <dbReference type="ChEBI" id="CHEBI:29950"/>
        <dbReference type="ChEBI" id="CHEBI:33737"/>
        <dbReference type="ChEBI" id="CHEBI:33738"/>
        <dbReference type="ChEBI" id="CHEBI:50058"/>
        <dbReference type="EC" id="1.8.7.2"/>
    </reaction>
</comment>
<comment type="cofactor">
    <cofactor evidence="2 3 4 5 6 8">
        <name>[4Fe-4S] cluster</name>
        <dbReference type="ChEBI" id="CHEBI:49883"/>
    </cofactor>
    <text evidence="2 3 4 5 6 8">Binds 1 [4Fe-4S] cluster.</text>
</comment>
<comment type="biophysicochemical properties">
    <redoxPotential>
        <text evidence="3">E(0) is -320 mV.</text>
    </redoxPotential>
</comment>
<comment type="subunit">
    <text evidence="2 3 4 5 6 8">Heterodimer of subunit A (variable subunit) and subunit B (catalytic subunit). Heterodimeric FTR forms a complex with ferredoxin and thioredoxin.</text>
</comment>
<comment type="interaction">
    <interactant intactId="EBI-863211">
        <id>Q55389</id>
    </interactant>
    <interactant intactId="EBI-863219">
        <id>Q55781</id>
        <label>ftrV</label>
    </interactant>
    <organismsDiffer>false</organismsDiffer>
    <experiments>4</experiments>
</comment>
<comment type="interaction">
    <interactant intactId="EBI-863211">
        <id>Q55389</id>
    </interactant>
    <interactant intactId="EBI-863421">
        <id>P27320</id>
        <label>petF</label>
    </interactant>
    <organismsDiffer>false</organismsDiffer>
    <experiments>4</experiments>
</comment>
<comment type="interaction">
    <interactant intactId="EBI-863211">
        <id>Q55389</id>
    </interactant>
    <interactant intactId="EBI-537449">
        <id>P07591</id>
    </interactant>
    <organismsDiffer>true</organismsDiffer>
    <experiments>4</experiments>
</comment>
<comment type="interaction">
    <interactant intactId="EBI-863211">
        <id>Q55389</id>
    </interactant>
    <interactant intactId="EBI-863615">
        <id>P09856</id>
    </interactant>
    <organismsDiffer>true</organismsDiffer>
    <experiments>5</experiments>
</comment>
<comment type="induction">
    <text evidence="7">Dependent on photosynthetic conditions. Expression declines about 80-90% in the darkness. Re-illumination up-regulates the expression to normal levels. In the presence of glucose, expression is down-regulated by about 20%.</text>
</comment>
<comment type="similarity">
    <text evidence="14">Belongs to the ferredoxin thioredoxin reductase beta subunit family.</text>
</comment>
<accession>Q55389</accession>
<organism>
    <name type="scientific">Synechocystis sp. (strain ATCC 27184 / PCC 6803 / Kazusa)</name>
    <dbReference type="NCBI Taxonomy" id="1111708"/>
    <lineage>
        <taxon>Bacteria</taxon>
        <taxon>Bacillati</taxon>
        <taxon>Cyanobacteriota</taxon>
        <taxon>Cyanophyceae</taxon>
        <taxon>Synechococcales</taxon>
        <taxon>Merismopediaceae</taxon>
        <taxon>Synechocystis</taxon>
    </lineage>
</organism>
<reference evidence="15" key="1">
    <citation type="journal article" date="1996" name="DNA Res.">
        <title>Sequence analysis of the genome of the unicellular cyanobacterium Synechocystis sp. strain PCC6803. II. Sequence determination of the entire genome and assignment of potential protein-coding regions.</title>
        <authorList>
            <person name="Kaneko T."/>
            <person name="Sato S."/>
            <person name="Kotani H."/>
            <person name="Tanaka A."/>
            <person name="Asamizu E."/>
            <person name="Nakamura Y."/>
            <person name="Miyajima N."/>
            <person name="Hirosawa M."/>
            <person name="Sugiura M."/>
            <person name="Sasamoto S."/>
            <person name="Kimura T."/>
            <person name="Hosouchi T."/>
            <person name="Matsuno A."/>
            <person name="Muraki A."/>
            <person name="Nakazaki N."/>
            <person name="Naruo K."/>
            <person name="Okumura S."/>
            <person name="Shimpo S."/>
            <person name="Takeuchi C."/>
            <person name="Wada T."/>
            <person name="Watanabe A."/>
            <person name="Yamada M."/>
            <person name="Yasuda M."/>
            <person name="Tabata S."/>
        </authorList>
    </citation>
    <scope>NUCLEOTIDE SEQUENCE [LARGE SCALE GENOMIC DNA]</scope>
    <source>
        <strain>ATCC 27184 / PCC 6803 / Kazusa</strain>
    </source>
</reference>
<reference evidence="14" key="2">
    <citation type="journal article" date="2004" name="J. Biol. Chem.">
        <title>Characterization of ferredoxin:thioredoxin reductase modified by site-directed mutagenesis.</title>
        <authorList>
            <person name="Glauser D.A."/>
            <person name="Bourquin F."/>
            <person name="Manieri W."/>
            <person name="Schurmann P."/>
        </authorList>
    </citation>
    <scope>FUNCTION</scope>
    <scope>CATALYTIC ACTIVITY</scope>
    <scope>COFACTOR</scope>
    <scope>BIOPHYSICOCHEMICAL PROPERTIES</scope>
    <scope>SUBUNIT</scope>
    <scope>ACTIVE SITE</scope>
    <scope>MUTAGENESIS OF CYS-58; HIS-87 AND CYS-88</scope>
    <source>
        <strain evidence="3">ATCC 27184 / PCC 6803 / N-1</strain>
    </source>
</reference>
<reference evidence="14" key="3">
    <citation type="journal article" date="2006" name="FEBS Lett.">
        <title>Ferredoxin/ferredoxin-thioredoxin reductase complex: Complete NMR mapping of the interaction site on ferredoxin by gallium substitution.</title>
        <authorList>
            <person name="Xu X."/>
            <person name="Kim S.K."/>
            <person name="Schurmann P."/>
            <person name="Hirasawa M."/>
            <person name="Tripathy J.N."/>
            <person name="Smith J."/>
            <person name="Knaff D.B."/>
            <person name="Ubbink M."/>
        </authorList>
    </citation>
    <scope>COFACTOR</scope>
    <scope>SUBUNIT</scope>
    <scope>NMR SPECTROSCOPY OF THE COMPLEX CONTAINING THE FTR HETERODIMER AND FERREDOXIN</scope>
    <source>
        <strain evidence="4">ATCC 27184 / PCC 6803 / N-1</strain>
    </source>
</reference>
<reference evidence="14" key="4">
    <citation type="journal article" date="2009" name="Biochemistry">
        <title>Role of histidine-86 in the catalytic mechanism of ferredoxin:thioredoxin reductase.</title>
        <authorList>
            <person name="Walters E.M."/>
            <person name="Garcia-Serres R."/>
            <person name="Naik S.G."/>
            <person name="Bourquin F."/>
            <person name="Glauser D.A."/>
            <person name="Schurmann P."/>
            <person name="Huynh B.H."/>
            <person name="Johnson M.K."/>
        </authorList>
    </citation>
    <scope>CATALYTIC ACTIVITY</scope>
    <scope>COFACTOR</scope>
    <scope>EPR SPECTROSCOPY; RESONANCE RAMAN SPECTROSCOPY; MOSSBAUER SPECTROSCOPY AND MAGNETIC CIRCULAR DICHROISM</scope>
    <scope>SUBUNIT</scope>
    <scope>ACTIVE SITE</scope>
    <scope>MUTAGENESIS OF HIS-87</scope>
    <source>
        <strain evidence="6">ATCC 27184 / PCC 6803 / N-1</strain>
    </source>
</reference>
<reference evidence="14" key="5">
    <citation type="journal article" date="2009" name="J. Am. Chem. Soc.">
        <title>Ternary protein complex of ferredoxin, ferredoxin:thioredoxin reductase, and thioredoxin studied by paramagnetic NMR spectroscopy.</title>
        <authorList>
            <person name="Xu X."/>
            <person name="Schurmann P."/>
            <person name="Chung J.S."/>
            <person name="Hass M.A."/>
            <person name="Kim S.K."/>
            <person name="Hirasawa M."/>
            <person name="Tripathy J.N."/>
            <person name="Knaff D.B."/>
            <person name="Ubbink M."/>
        </authorList>
    </citation>
    <scope>FUNCTION</scope>
    <scope>CATALYTIC ACTIVITY</scope>
    <scope>COFACTOR</scope>
    <scope>SUBUNIT</scope>
    <scope>NMR SPECTROSCOPY OF THE COMPLEX CONTAINING FERREDOXIN; THE FTR HETERODIMER AND TRX-M</scope>
    <source>
        <strain evidence="8">ATCC 27184 / PCC 6803 / N-1</strain>
    </source>
</reference>
<reference evidence="14" key="6">
    <citation type="journal article" date="2009" name="Mol. Plant">
        <title>Photosynthetic regulation of the cyanobacterium Synechocystis sp. PCC 6803 thioredoxin system and functional analysis of TrxB (Trx x) and TrxQ (Trx y) thioredoxins.</title>
        <authorList>
            <person name="Perez-Perez M.E."/>
            <person name="Martin-Figueroa E."/>
            <person name="Florencio F.J."/>
        </authorList>
    </citation>
    <scope>INDUCTION</scope>
    <source>
        <strain evidence="7">ATCC 27184 / PCC 6803 / N-1</strain>
    </source>
</reference>
<reference evidence="14 16" key="7">
    <citation type="journal article" date="2000" name="Science">
        <title>Redox signaling in chloroplasts: cleavage of disulfides by an iron-sulfur cluster.</title>
        <authorList>
            <person name="Dai S."/>
            <person name="Schwendtmayer C."/>
            <person name="Schurmann P."/>
            <person name="Ramaswamy S."/>
            <person name="Eklund H."/>
        </authorList>
    </citation>
    <scope>X-RAY CRYSTALLOGRAPHY (1.60 ANGSTROMS) OF 2-118 IN COMPLEX WITH IRON-SULFUR (4FE-4S) AND FTRV</scope>
    <scope>FUNCTION</scope>
    <scope>COFACTOR</scope>
    <scope>SUBUNIT</scope>
    <scope>ACTIVE SITE</scope>
    <scope>DISULFIDE BOND</scope>
    <source>
        <strain evidence="2">ATCC 27184 / PCC 6803 / N-1</strain>
    </source>
</reference>
<reference evidence="14 17" key="8">
    <citation type="journal article" date="2007" name="Nature">
        <title>Structural snapshots along the reaction pathway of ferredoxin-thioredoxin reductase.</title>
        <authorList>
            <person name="Dai S."/>
            <person name="Friemann R."/>
            <person name="Glauser D.A."/>
            <person name="Bourquin F."/>
            <person name="Manieri W."/>
            <person name="Schurmann P."/>
            <person name="Eklund H."/>
        </authorList>
    </citation>
    <scope>X-RAY CRYSTALLOGRAPHY (1.65 ANGSTROMS) OF 8-118 IN COMPLEXES WITH IRON-SULFUR (4FE-4S); FTRV; PETF/FERREDOXIN; TRX-F AND TRX-M</scope>
    <scope>FUNCTION</scope>
    <scope>CATALYTIC ACTIVITY</scope>
    <scope>COFACTOR</scope>
    <scope>SUBUNIT</scope>
    <scope>ACTIVE SITE</scope>
    <scope>DISULFIDE BOND</scope>
    <source>
        <strain evidence="5">ATCC 27184 / PCC 6803 / N-1</strain>
    </source>
</reference>
<sequence length="118" mass="13390">MTSSDTQNNKTLAAMKNFAEQYAKRTDTYFCSDLSVTAVVIEGLARHKEELGSPLCPCRHYEDKEAEVKNTFWNCPCVPMRERKECHCMLFLTPDNDFAGDAQDIPMETLEEVKASMA</sequence>
<dbReference type="EC" id="1.8.7.2" evidence="3"/>
<dbReference type="EMBL" id="BA000022">
    <property type="protein sequence ID" value="BAA10479.1"/>
    <property type="molecule type" value="Genomic_DNA"/>
</dbReference>
<dbReference type="PIR" id="S75744">
    <property type="entry name" value="S75744"/>
</dbReference>
<dbReference type="PDB" id="1DJ7">
    <property type="method" value="X-ray"/>
    <property type="resolution" value="1.60 A"/>
    <property type="chains" value="A=2-118"/>
</dbReference>
<dbReference type="PDB" id="2PU9">
    <property type="method" value="X-ray"/>
    <property type="resolution" value="1.65 A"/>
    <property type="chains" value="A=9-118"/>
</dbReference>
<dbReference type="PDB" id="2PUK">
    <property type="method" value="X-ray"/>
    <property type="resolution" value="3.00 A"/>
    <property type="chains" value="A/E=9-116"/>
</dbReference>
<dbReference type="PDB" id="2PUO">
    <property type="method" value="X-ray"/>
    <property type="resolution" value="1.70 A"/>
    <property type="chains" value="A=8-116"/>
</dbReference>
<dbReference type="PDB" id="2PVD">
    <property type="method" value="X-ray"/>
    <property type="resolution" value="1.95 A"/>
    <property type="chains" value="A=12-118"/>
</dbReference>
<dbReference type="PDB" id="2PVG">
    <property type="method" value="X-ray"/>
    <property type="resolution" value="2.40 A"/>
    <property type="chains" value="A=11-116"/>
</dbReference>
<dbReference type="PDB" id="2PVO">
    <property type="method" value="X-ray"/>
    <property type="resolution" value="3.40 A"/>
    <property type="chains" value="A=9-118"/>
</dbReference>
<dbReference type="PDBsum" id="1DJ7"/>
<dbReference type="PDBsum" id="2PU9"/>
<dbReference type="PDBsum" id="2PUK"/>
<dbReference type="PDBsum" id="2PUO"/>
<dbReference type="PDBsum" id="2PVD"/>
<dbReference type="PDBsum" id="2PVG"/>
<dbReference type="PDBsum" id="2PVO"/>
<dbReference type="SMR" id="Q55389"/>
<dbReference type="DIP" id="DIP-35307N"/>
<dbReference type="IntAct" id="Q55389">
    <property type="interactions" value="10"/>
</dbReference>
<dbReference type="STRING" id="1148.gene:10499983"/>
<dbReference type="PaxDb" id="1148-1001238"/>
<dbReference type="EnsemblBacteria" id="BAA10479">
    <property type="protein sequence ID" value="BAA10479"/>
    <property type="gene ID" value="BAA10479"/>
</dbReference>
<dbReference type="KEGG" id="syn:sll0554"/>
<dbReference type="eggNOG" id="COG4802">
    <property type="taxonomic scope" value="Bacteria"/>
</dbReference>
<dbReference type="InParanoid" id="Q55389"/>
<dbReference type="PhylomeDB" id="Q55389"/>
<dbReference type="BioCyc" id="MetaCyc:MONOMER-14463"/>
<dbReference type="BRENDA" id="1.8.7.2">
    <property type="organism ID" value="6192"/>
</dbReference>
<dbReference type="EvolutionaryTrace" id="Q55389"/>
<dbReference type="Proteomes" id="UP000001425">
    <property type="component" value="Chromosome"/>
</dbReference>
<dbReference type="GO" id="GO:0051539">
    <property type="term" value="F:4 iron, 4 sulfur cluster binding"/>
    <property type="evidence" value="ECO:0000314"/>
    <property type="project" value="UniProtKB"/>
</dbReference>
<dbReference type="GO" id="GO:0009055">
    <property type="term" value="F:electron transfer activity"/>
    <property type="evidence" value="ECO:0000314"/>
    <property type="project" value="UniProtKB"/>
</dbReference>
<dbReference type="GO" id="GO:0103012">
    <property type="term" value="F:ferredoxin-thioredoxin reductase activity"/>
    <property type="evidence" value="ECO:0000314"/>
    <property type="project" value="UniProtKB"/>
</dbReference>
<dbReference type="GO" id="GO:0046872">
    <property type="term" value="F:metal ion binding"/>
    <property type="evidence" value="ECO:0007669"/>
    <property type="project" value="UniProtKB-KW"/>
</dbReference>
<dbReference type="GO" id="GO:0016730">
    <property type="term" value="F:oxidoreductase activity, acting on iron-sulfur proteins as donors"/>
    <property type="evidence" value="ECO:0007669"/>
    <property type="project" value="InterPro"/>
</dbReference>
<dbReference type="GO" id="GO:0015979">
    <property type="term" value="P:photosynthesis"/>
    <property type="evidence" value="ECO:0000270"/>
    <property type="project" value="UniProtKB"/>
</dbReference>
<dbReference type="FunFam" id="3.90.460.10:FF:000001">
    <property type="entry name" value="Ferredoxin-thioredoxin reductase, catalytic chain"/>
    <property type="match status" value="1"/>
</dbReference>
<dbReference type="Gene3D" id="3.90.460.10">
    <property type="entry name" value="Ferredoxin thioredoxin reductase catalytic beta subunit"/>
    <property type="match status" value="1"/>
</dbReference>
<dbReference type="InterPro" id="IPR004209">
    <property type="entry name" value="FTR_bsu"/>
</dbReference>
<dbReference type="InterPro" id="IPR024707">
    <property type="entry name" value="FTR_bsu_Cyanobacter"/>
</dbReference>
<dbReference type="InterPro" id="IPR036644">
    <property type="entry name" value="FTR_bsu_sf"/>
</dbReference>
<dbReference type="PANTHER" id="PTHR35113">
    <property type="entry name" value="FERREDOXIN-THIOREDOXIN REDUCTASE CATALYTIC CHAIN, CHLOROPLASTIC"/>
    <property type="match status" value="1"/>
</dbReference>
<dbReference type="PANTHER" id="PTHR35113:SF1">
    <property type="entry name" value="FERREDOXIN-THIOREDOXIN REDUCTASE CATALYTIC CHAIN, CHLOROPLASTIC"/>
    <property type="match status" value="1"/>
</dbReference>
<dbReference type="Pfam" id="PF02943">
    <property type="entry name" value="FeThRed_B"/>
    <property type="match status" value="1"/>
</dbReference>
<dbReference type="PIRSF" id="PIRSF000260">
    <property type="entry name" value="FTRc"/>
    <property type="match status" value="1"/>
</dbReference>
<dbReference type="SUPFAM" id="SSF57662">
    <property type="entry name" value="Ferredoxin thioredoxin reductase (FTR), catalytic beta chain"/>
    <property type="match status" value="1"/>
</dbReference>